<protein>
    <recommendedName>
        <fullName evidence="4">Extended FMRFamide-10</fullName>
        <shortName evidence="4">FMRFa-10</shortName>
    </recommendedName>
</protein>
<comment type="function">
    <text evidence="1">FMRFamides and FMRFamide-like peptides are neuropeptides.</text>
</comment>
<comment type="subcellular location">
    <subcellularLocation>
        <location evidence="6">Secreted</location>
    </subcellularLocation>
</comment>
<comment type="similarity">
    <text evidence="2">Belongs to the FARP (FMRF amide related peptide) family.</text>
</comment>
<evidence type="ECO:0000250" key="1">
    <source>
        <dbReference type="UniProtKB" id="P34405"/>
    </source>
</evidence>
<evidence type="ECO:0000255" key="2"/>
<evidence type="ECO:0000269" key="3">
    <source>
    </source>
</evidence>
<evidence type="ECO:0000303" key="4">
    <source>
    </source>
</evidence>
<evidence type="ECO:0000305" key="5"/>
<evidence type="ECO:0000305" key="6">
    <source>
    </source>
</evidence>
<feature type="peptide" id="PRO_0000421548" description="Extended FMRFamide-10" evidence="3">
    <location>
        <begin position="1"/>
        <end position="11"/>
    </location>
</feature>
<name>FAR10_AUSRA</name>
<proteinExistence type="evidence at protein level"/>
<organism>
    <name type="scientific">Austrophasma rawsonvillense</name>
    <name type="common">Gladiator</name>
    <name type="synonym">Heel-walker</name>
    <dbReference type="NCBI Taxonomy" id="253137"/>
    <lineage>
        <taxon>Eukaryota</taxon>
        <taxon>Metazoa</taxon>
        <taxon>Ecdysozoa</taxon>
        <taxon>Arthropoda</taxon>
        <taxon>Hexapoda</taxon>
        <taxon>Insecta</taxon>
        <taxon>Pterygota</taxon>
        <taxon>Neoptera</taxon>
        <taxon>Polyneoptera</taxon>
        <taxon>Mantophasmatodea</taxon>
        <taxon>Austrophasmatidae</taxon>
        <taxon>Austrophasma</taxon>
    </lineage>
</organism>
<accession>B3A0A8</accession>
<keyword id="KW-0903">Direct protein sequencing</keyword>
<keyword id="KW-0527">Neuropeptide</keyword>
<keyword id="KW-0964">Secreted</keyword>
<reference evidence="5" key="1">
    <citation type="journal article" date="2012" name="Syst. Biol.">
        <title>Peptidomics-based phylogeny and biogeography of Mantophasmatodea (Hexapoda).</title>
        <authorList>
            <person name="Predel R."/>
            <person name="Neupert S."/>
            <person name="Huetteroth W."/>
            <person name="Kahnt J."/>
            <person name="Waidelich D."/>
            <person name="Roth S."/>
        </authorList>
    </citation>
    <scope>PROTEIN SEQUENCE</scope>
    <source>
        <tissue evidence="3">Thoracic perisympathetic organs</tissue>
    </source>
</reference>
<dbReference type="GO" id="GO:0005576">
    <property type="term" value="C:extracellular region"/>
    <property type="evidence" value="ECO:0007669"/>
    <property type="project" value="UniProtKB-SubCell"/>
</dbReference>
<dbReference type="GO" id="GO:0007218">
    <property type="term" value="P:neuropeptide signaling pathway"/>
    <property type="evidence" value="ECO:0007669"/>
    <property type="project" value="UniProtKB-KW"/>
</dbReference>
<sequence>PAPESGFIRDP</sequence>